<comment type="function">
    <text evidence="2 8 9 11">ATP-dependent DNA helicase that unwinds single- and double-stranded DNA in a 3'-5' direction (PubMed:9840919). Participates in DNA replication and repair (By similarity). Involved in 5'-end resection of DNA during double-strand break (DSB) repair: unwinds DNA and recruits DNA2 which mediates the cleavage of 5'-ssDNA (PubMed:9840919). Negatively regulates sister chromatid exchange (SCE) (PubMed:27010503, PubMed:9840919). Stimulates DNA 4-way junction branch migration and DNA Holliday junction dissolution. Unwinds G-quadruplex DNA. Binds single-stranded DNA (ssDNA), forked duplex DNA and DNA Holliday junction (By similarity). Recruited by the KHDC3-OOEP scaffold to DNA replication forks where it is retained by TRIM25 ubiquitination, it thereby promotes the restart of stalled replication forks.</text>
</comment>
<comment type="catalytic activity">
    <reaction evidence="10">
        <text>Couples ATP hydrolysis with the unwinding of duplex DNA by translocating in the 3'-5' direction.</text>
        <dbReference type="EC" id="5.6.2.4"/>
    </reaction>
</comment>
<comment type="catalytic activity">
    <reaction evidence="10">
        <text>ATP + H2O = ADP + phosphate + H(+)</text>
        <dbReference type="Rhea" id="RHEA:13065"/>
        <dbReference type="ChEBI" id="CHEBI:15377"/>
        <dbReference type="ChEBI" id="CHEBI:15378"/>
        <dbReference type="ChEBI" id="CHEBI:30616"/>
        <dbReference type="ChEBI" id="CHEBI:43474"/>
        <dbReference type="ChEBI" id="CHEBI:456216"/>
    </reaction>
</comment>
<comment type="cofactor">
    <cofactor evidence="2">
        <name>Zn(2+)</name>
        <dbReference type="ChEBI" id="CHEBI:29105"/>
    </cofactor>
    <text evidence="2">Binds 1 zinc ion per subunit.</text>
</comment>
<comment type="subunit">
    <text evidence="2 9">Monomer. Homodimer (via N-terminus). Homotetramer (via N-terminus); dimer of dimers. Homohexamer (via N-terminus). Self-association negatively regulates DNA unwinding amplitude and rate. Oligomer complexes dissociate into monomer in presence of ATP. Part of the BRCA1-associated genome surveillance complex (BASC), which contains BRCA1, MSH2, MSH6, MLH1, ATM, BLM, PMS2 and the RAD50-MRE11-NBS1 protein complex. This association could be a dynamic process changing throughout the cell cycle and within subnuclear domains. Interacts with RMI complex. Interacts directly with RMI1 (via N-terminal region) component of RMI complex. Found in a complex, at least composed of BLM, RAD51 and SPIDR; the complex formation is mediated by SPIDR. Interacts with the KHDC3/FILIA-OOEP/FLOPED scaffold complex and TRIM25 at DNA replication forks (PubMed:29125140). Interacts with ubiquitinated FANCD2 (By similarity). Interacts with SUPV3L1 (By similarity). Interacts with TOP3A (via N-terminal region). Interacts with SPIDR (via C-terminal region); the interaction is direct and required to target BLM to sites of DNA damage.</text>
</comment>
<comment type="subcellular location">
    <subcellularLocation>
        <location evidence="9">Nucleus</location>
    </subcellularLocation>
    <text evidence="9">Localized to DNA replication forks, especially after DNA damage.</text>
</comment>
<comment type="tissue specificity">
    <text evidence="8 10">Highly expressed in testis 12-14 days after birth (corresponding to the pachytene phase) and at much lower levels in brain, heart, liver, lung, thymus, kidney and spleen (PubMed:27010503, PubMed:9840919). Expressed in bone marrow (PubMed:27010503).</text>
</comment>
<comment type="domain">
    <text evidence="2">The N-terminal region mediates dimerization and homooligomerization. Both the helicase ATP-binding domain and the helicase C-terminal domain form intramolecular interactions with the HRDC domain in a ATP-dependent manner. The HRDC domain is required for single-stranded DNA (ssDNA) and DNA Holliday junction binding.</text>
</comment>
<comment type="PTM">
    <text evidence="2 9">Poly-ubiquitinated by TRIM25 at Lys-264. Deubiquitinated by USP37; leading to stabilization in order to sustain the DNA damage response (By similarity).</text>
</comment>
<comment type="PTM">
    <text evidence="1">Phosphorylated in response to DNA damage. Phosphorylation requires the FANCA-FANCC-FANCE-FANCF-FANCG protein complex, as well as the presence of RMI1 (By similarity).</text>
</comment>
<comment type="similarity">
    <text evidence="12">Belongs to the helicase family. RecQ subfamily.</text>
</comment>
<keyword id="KW-0007">Acetylation</keyword>
<keyword id="KW-0067">ATP-binding</keyword>
<keyword id="KW-0227">DNA damage</keyword>
<keyword id="KW-0234">DNA repair</keyword>
<keyword id="KW-0235">DNA replication</keyword>
<keyword id="KW-0238">DNA-binding</keyword>
<keyword id="KW-0347">Helicase</keyword>
<keyword id="KW-0378">Hydrolase</keyword>
<keyword id="KW-0413">Isomerase</keyword>
<keyword id="KW-1017">Isopeptide bond</keyword>
<keyword id="KW-0479">Metal-binding</keyword>
<keyword id="KW-0547">Nucleotide-binding</keyword>
<keyword id="KW-0539">Nucleus</keyword>
<keyword id="KW-0597">Phosphoprotein</keyword>
<keyword id="KW-1185">Reference proteome</keyword>
<keyword id="KW-0832">Ubl conjugation</keyword>
<keyword id="KW-0862">Zinc</keyword>
<organism>
    <name type="scientific">Mus musculus</name>
    <name type="common">Mouse</name>
    <dbReference type="NCBI Taxonomy" id="10090"/>
    <lineage>
        <taxon>Eukaryota</taxon>
        <taxon>Metazoa</taxon>
        <taxon>Chordata</taxon>
        <taxon>Craniata</taxon>
        <taxon>Vertebrata</taxon>
        <taxon>Euteleostomi</taxon>
        <taxon>Mammalia</taxon>
        <taxon>Eutheria</taxon>
        <taxon>Euarchontoglires</taxon>
        <taxon>Glires</taxon>
        <taxon>Rodentia</taxon>
        <taxon>Myomorpha</taxon>
        <taxon>Muroidea</taxon>
        <taxon>Muridae</taxon>
        <taxon>Murinae</taxon>
        <taxon>Mus</taxon>
        <taxon>Mus</taxon>
    </lineage>
</organism>
<gene>
    <name type="primary">Blm</name>
</gene>
<sequence length="1416" mass="158366">MAAVPLNNLQEQLQRHSARKLNNQPSLSKPKSLGFTFKKKTSEGDVSVTSVSVVKTPALSDKDVNVSEAFSFTESPLHKPKQQAKIEGFFKHFPGRQQSKGTCSEPSLPATVQTAQDTLCTTPKTPTAKKLPVAVFKKLEFSSSADSLSDWADMDDFDMSASDAFASLAKNPATRVSTAQKMKKTKRNFFKPPPRKANAVKTDLTPPSPECLQVDLTKESEEEEEEEEEAEGADCLSRDVICIDNDSASEELTEKDTQESQSLKAHLGAERGDSEKKSHEDEAVFHSVQNTEYFEHNDNDYDIDFVPPSPEEIISTASSSLKCSSMLKDLDDSDKEKGILSTSEELLSKPEEMTTHKSDAGTSKDCDAQQIRIQQQLIHVMEHICKLVDTVPTDELEALNCGTELLQQRNIRRKLLAEAGFNGNDVRLLGSLWRHRPDSLDNTVQGDSCPVGHPNKELNSPYLLSHSPSTEECLPTTTPGKTGFSATPKNLFERPLLNSHLQKSFVSSNWAETPRMENRNESTDFPGSVLTSTTVKAQSKQAASGWNVERHGQASYDIDNFNIDDFDDDDDDDDWENIMHNFPASKSSTATYPPIKEGGPVKSLSERISSAKAKFLPVVSTAQNTNLSESIQNCSDKLAQNLSSKNPKHEHFQSLNFPHTKEMMKIFHKKFGLHNFRTNQLEAINAALLGEDCFILMPTGGGKSLCYQLPACVSPGVTIVISPLRSLIVDQVQKLTSFDIPATYLTGDKTDSEAANIYLQLSKKDPIIKLLYVTPEKVCASNRLISTLENLYERKLLARFVIDEAHCVSQWGHDFRQDYKRMNMLRQKFPSVPVMALTATANPRVQKDILTQLKILRPQVFSMSFNRHNLKYYVLPKKPKKVAFDCLEWIRKHHPYDSGIIYCLSRRECDTMADTLQREGLAALAYHAGLSDSARDEVQHKWINQDNCQVICATIAFGMGIDKPDVRFVIHASLPKSMEGYYQESGRAGRDGEISHCVLFYTYHDVTRLKRLIMMEKDGNYHTKETHVNNLYSMVHYCENITECRRIQLLAYFGEKGFNPDFCKKYPDVSCDNCCKTKDYKTKDVTDDVKNIIRFVQEHSSSPGTRNIGPAGRFTLNMLVDIFLGSKSAKVKSGIFGKGTTYSRHNAERLFKKLILDKILDEDLYINANDQPIAYVMLGTKAHSVLSGHLKVDFMETENSSSIKKQKALVAKVSQREEVVKKCLGELTEVCKLLGKVFGVHYFNIFNTATLKKLAESLSSDPEVLLQIDGVTEDKLEKYGAEVIPVLQKYSEWTVPAEDGSPGARGAPEDTEEEEEEAPVSSHYFANQTRNERKRKKMSATHKPKRRRTSYGGFRAKGGSTTCRKTTSKSKFYGVTGSRSASCASQATSSASRKLGIMAPPKPVNRTFLRPSYAFS</sequence>
<dbReference type="EC" id="5.6.2.4" evidence="10"/>
<dbReference type="EMBL" id="Z98263">
    <property type="protein sequence ID" value="CAB10933.1"/>
    <property type="molecule type" value="mRNA"/>
</dbReference>
<dbReference type="EMBL" id="AB008674">
    <property type="protein sequence ID" value="BAA32001.1"/>
    <property type="molecule type" value="mRNA"/>
</dbReference>
<dbReference type="CCDS" id="CCDS40000.1"/>
<dbReference type="RefSeq" id="NP_001035992.1">
    <property type="nucleotide sequence ID" value="NM_001042527.3"/>
</dbReference>
<dbReference type="RefSeq" id="NP_031576.4">
    <property type="nucleotide sequence ID" value="NM_007550.4"/>
</dbReference>
<dbReference type="SMR" id="O88700"/>
<dbReference type="BioGRID" id="198357">
    <property type="interactions" value="8"/>
</dbReference>
<dbReference type="ComplexPortal" id="CPX-3303">
    <property type="entry name" value="BTR double Holliday Junction dissolution complex"/>
</dbReference>
<dbReference type="CORUM" id="O88700"/>
<dbReference type="DIP" id="DIP-27643N"/>
<dbReference type="FunCoup" id="O88700">
    <property type="interactions" value="1736"/>
</dbReference>
<dbReference type="STRING" id="10090.ENSMUSP00000127995"/>
<dbReference type="iPTMnet" id="O88700"/>
<dbReference type="PhosphoSitePlus" id="O88700"/>
<dbReference type="jPOST" id="O88700"/>
<dbReference type="PaxDb" id="10090-ENSMUSP00000127995"/>
<dbReference type="PeptideAtlas" id="O88700"/>
<dbReference type="ProteomicsDB" id="281695"/>
<dbReference type="Pumba" id="O88700"/>
<dbReference type="Antibodypedia" id="704">
    <property type="antibodies" value="496 antibodies from 37 providers"/>
</dbReference>
<dbReference type="DNASU" id="12144"/>
<dbReference type="Ensembl" id="ENSMUST00000081314.11">
    <property type="protein sequence ID" value="ENSMUSP00000080062.5"/>
    <property type="gene ID" value="ENSMUSG00000030528.13"/>
</dbReference>
<dbReference type="GeneID" id="12144"/>
<dbReference type="KEGG" id="mmu:12144"/>
<dbReference type="UCSC" id="uc009iax.2">
    <property type="organism name" value="mouse"/>
</dbReference>
<dbReference type="AGR" id="MGI:1328362"/>
<dbReference type="CTD" id="641"/>
<dbReference type="MGI" id="MGI:1328362">
    <property type="gene designation" value="Blm"/>
</dbReference>
<dbReference type="VEuPathDB" id="HostDB:ENSMUSG00000030528"/>
<dbReference type="eggNOG" id="KOG0351">
    <property type="taxonomic scope" value="Eukaryota"/>
</dbReference>
<dbReference type="GeneTree" id="ENSGT00940000156800"/>
<dbReference type="HOGENOM" id="CLU_001103_1_1_1"/>
<dbReference type="InParanoid" id="O88700"/>
<dbReference type="OMA" id="STTCRRM"/>
<dbReference type="OrthoDB" id="10261556at2759"/>
<dbReference type="PhylomeDB" id="O88700"/>
<dbReference type="Reactome" id="R-MMU-174414">
    <property type="pathway name" value="Processive synthesis on the C-strand of the telomere"/>
</dbReference>
<dbReference type="Reactome" id="R-MMU-3108214">
    <property type="pathway name" value="SUMOylation of DNA damage response and repair proteins"/>
</dbReference>
<dbReference type="Reactome" id="R-MMU-5685938">
    <property type="pathway name" value="HDR through Single Strand Annealing (SSA)"/>
</dbReference>
<dbReference type="Reactome" id="R-MMU-5685942">
    <property type="pathway name" value="HDR through Homologous Recombination (HRR)"/>
</dbReference>
<dbReference type="Reactome" id="R-MMU-5693568">
    <property type="pathway name" value="Resolution of D-loop Structures through Holliday Junction Intermediates"/>
</dbReference>
<dbReference type="Reactome" id="R-MMU-5693579">
    <property type="pathway name" value="Homologous DNA Pairing and Strand Exchange"/>
</dbReference>
<dbReference type="Reactome" id="R-MMU-5693607">
    <property type="pathway name" value="Processing of DNA double-strand break ends"/>
</dbReference>
<dbReference type="Reactome" id="R-MMU-5693616">
    <property type="pathway name" value="Presynaptic phase of homologous DNA pairing and strand exchange"/>
</dbReference>
<dbReference type="Reactome" id="R-MMU-6804756">
    <property type="pathway name" value="Regulation of TP53 Activity through Phosphorylation"/>
</dbReference>
<dbReference type="Reactome" id="R-MMU-69473">
    <property type="pathway name" value="G2/M DNA damage checkpoint"/>
</dbReference>
<dbReference type="BioGRID-ORCS" id="12144">
    <property type="hits" value="8 hits in 116 CRISPR screens"/>
</dbReference>
<dbReference type="ChiTaRS" id="Blm">
    <property type="organism name" value="mouse"/>
</dbReference>
<dbReference type="PRO" id="PR:O88700"/>
<dbReference type="Proteomes" id="UP000000589">
    <property type="component" value="Chromosome 7"/>
</dbReference>
<dbReference type="RNAct" id="O88700">
    <property type="molecule type" value="protein"/>
</dbReference>
<dbReference type="Bgee" id="ENSMUSG00000030528">
    <property type="expression patterns" value="Expressed in embryonic post-anal tail and 166 other cell types or tissues"/>
</dbReference>
<dbReference type="ExpressionAtlas" id="O88700">
    <property type="expression patterns" value="baseline and differential"/>
</dbReference>
<dbReference type="GO" id="GO:0000781">
    <property type="term" value="C:chromosome, telomeric region"/>
    <property type="evidence" value="ECO:0000315"/>
    <property type="project" value="BHF-UCL"/>
</dbReference>
<dbReference type="GO" id="GO:0005737">
    <property type="term" value="C:cytoplasm"/>
    <property type="evidence" value="ECO:0000314"/>
    <property type="project" value="MGI"/>
</dbReference>
<dbReference type="GO" id="GO:0001673">
    <property type="term" value="C:male germ cell nucleus"/>
    <property type="evidence" value="ECO:0000314"/>
    <property type="project" value="MGI"/>
</dbReference>
<dbReference type="GO" id="GO:0000228">
    <property type="term" value="C:nuclear chromosome"/>
    <property type="evidence" value="ECO:0000250"/>
    <property type="project" value="UniProtKB"/>
</dbReference>
<dbReference type="GO" id="GO:0005654">
    <property type="term" value="C:nucleoplasm"/>
    <property type="evidence" value="ECO:0000304"/>
    <property type="project" value="Reactome"/>
</dbReference>
<dbReference type="GO" id="GO:0005634">
    <property type="term" value="C:nucleus"/>
    <property type="evidence" value="ECO:0000314"/>
    <property type="project" value="UniProtKB"/>
</dbReference>
<dbReference type="GO" id="GO:0045120">
    <property type="term" value="C:pronucleus"/>
    <property type="evidence" value="ECO:0000314"/>
    <property type="project" value="MGI"/>
</dbReference>
<dbReference type="GO" id="GO:0031422">
    <property type="term" value="C:RecQ family helicase-topoisomerase III complex"/>
    <property type="evidence" value="ECO:0000266"/>
    <property type="project" value="ComplexPortal"/>
</dbReference>
<dbReference type="GO" id="GO:0005657">
    <property type="term" value="C:replication fork"/>
    <property type="evidence" value="ECO:0000314"/>
    <property type="project" value="MGI"/>
</dbReference>
<dbReference type="GO" id="GO:0043138">
    <property type="term" value="F:3'-5' DNA helicase activity"/>
    <property type="evidence" value="ECO:0000314"/>
    <property type="project" value="MGI"/>
</dbReference>
<dbReference type="GO" id="GO:0005524">
    <property type="term" value="F:ATP binding"/>
    <property type="evidence" value="ECO:0000250"/>
    <property type="project" value="UniProtKB"/>
</dbReference>
<dbReference type="GO" id="GO:0016887">
    <property type="term" value="F:ATP hydrolysis activity"/>
    <property type="evidence" value="ECO:0007669"/>
    <property type="project" value="RHEA"/>
</dbReference>
<dbReference type="GO" id="GO:0003677">
    <property type="term" value="F:DNA binding"/>
    <property type="evidence" value="ECO:0000250"/>
    <property type="project" value="UniProtKB"/>
</dbReference>
<dbReference type="GO" id="GO:0003678">
    <property type="term" value="F:DNA helicase activity"/>
    <property type="evidence" value="ECO:0000250"/>
    <property type="project" value="UniProtKB"/>
</dbReference>
<dbReference type="GO" id="GO:0061749">
    <property type="term" value="F:forked DNA-dependent helicase activity"/>
    <property type="evidence" value="ECO:0000250"/>
    <property type="project" value="UniProtKB"/>
</dbReference>
<dbReference type="GO" id="GO:0000400">
    <property type="term" value="F:four-way junction DNA binding"/>
    <property type="evidence" value="ECO:0000250"/>
    <property type="project" value="UniProtKB"/>
</dbReference>
<dbReference type="GO" id="GO:0009378">
    <property type="term" value="F:four-way junction helicase activity"/>
    <property type="evidence" value="ECO:0000250"/>
    <property type="project" value="UniProtKB"/>
</dbReference>
<dbReference type="GO" id="GO:0042803">
    <property type="term" value="F:protein homodimerization activity"/>
    <property type="evidence" value="ECO:0000250"/>
    <property type="project" value="UniProtKB"/>
</dbReference>
<dbReference type="GO" id="GO:0003697">
    <property type="term" value="F:single-stranded DNA binding"/>
    <property type="evidence" value="ECO:0000250"/>
    <property type="project" value="UniProtKB"/>
</dbReference>
<dbReference type="GO" id="GO:0008270">
    <property type="term" value="F:zinc ion binding"/>
    <property type="evidence" value="ECO:0000250"/>
    <property type="project" value="UniProtKB"/>
</dbReference>
<dbReference type="GO" id="GO:0046632">
    <property type="term" value="P:alpha-beta T cell differentiation"/>
    <property type="evidence" value="ECO:0000315"/>
    <property type="project" value="MGI"/>
</dbReference>
<dbReference type="GO" id="GO:0046633">
    <property type="term" value="P:alpha-beta T cell proliferation"/>
    <property type="evidence" value="ECO:0000315"/>
    <property type="project" value="MGI"/>
</dbReference>
<dbReference type="GO" id="GO:0072757">
    <property type="term" value="P:cellular response to camptothecin"/>
    <property type="evidence" value="ECO:0000250"/>
    <property type="project" value="UniProtKB"/>
</dbReference>
<dbReference type="GO" id="GO:0072711">
    <property type="term" value="P:cellular response to hydroxyurea"/>
    <property type="evidence" value="ECO:0000250"/>
    <property type="project" value="UniProtKB"/>
</dbReference>
<dbReference type="GO" id="GO:0071479">
    <property type="term" value="P:cellular response to ionizing radiation"/>
    <property type="evidence" value="ECO:0000250"/>
    <property type="project" value="UniProtKB"/>
</dbReference>
<dbReference type="GO" id="GO:0071466">
    <property type="term" value="P:cellular response to xenobiotic stimulus"/>
    <property type="evidence" value="ECO:0000316"/>
    <property type="project" value="MGI"/>
</dbReference>
<dbReference type="GO" id="GO:0051276">
    <property type="term" value="P:chromosome organization"/>
    <property type="evidence" value="ECO:0000315"/>
    <property type="project" value="MGI"/>
</dbReference>
<dbReference type="GO" id="GO:1904157">
    <property type="term" value="P:DN4 thymocyte differentiation"/>
    <property type="evidence" value="ECO:0000315"/>
    <property type="project" value="MGI"/>
</dbReference>
<dbReference type="GO" id="GO:0006974">
    <property type="term" value="P:DNA damage response"/>
    <property type="evidence" value="ECO:0000250"/>
    <property type="project" value="UniProtKB"/>
</dbReference>
<dbReference type="GO" id="GO:0000729">
    <property type="term" value="P:DNA double-strand break processing"/>
    <property type="evidence" value="ECO:0000250"/>
    <property type="project" value="UniProtKB"/>
</dbReference>
<dbReference type="GO" id="GO:0032392">
    <property type="term" value="P:DNA geometric change"/>
    <property type="evidence" value="ECO:0000315"/>
    <property type="project" value="BHF-UCL"/>
</dbReference>
<dbReference type="GO" id="GO:0006281">
    <property type="term" value="P:DNA repair"/>
    <property type="evidence" value="ECO:0000314"/>
    <property type="project" value="MGI"/>
</dbReference>
<dbReference type="GO" id="GO:0006260">
    <property type="term" value="P:DNA replication"/>
    <property type="evidence" value="ECO:0000315"/>
    <property type="project" value="BHF-UCL"/>
</dbReference>
<dbReference type="GO" id="GO:0000724">
    <property type="term" value="P:double-strand break repair via homologous recombination"/>
    <property type="evidence" value="ECO:0000266"/>
    <property type="project" value="ComplexPortal"/>
</dbReference>
<dbReference type="GO" id="GO:0033080">
    <property type="term" value="P:immature T cell proliferation in thymus"/>
    <property type="evidence" value="ECO:0000315"/>
    <property type="project" value="MGI"/>
</dbReference>
<dbReference type="GO" id="GO:0006312">
    <property type="term" value="P:mitotic recombination"/>
    <property type="evidence" value="ECO:0000315"/>
    <property type="project" value="MGI"/>
</dbReference>
<dbReference type="GO" id="GO:0045950">
    <property type="term" value="P:negative regulation of mitotic recombination"/>
    <property type="evidence" value="ECO:0000315"/>
    <property type="project" value="UniProtKB"/>
</dbReference>
<dbReference type="GO" id="GO:0070244">
    <property type="term" value="P:negative regulation of thymocyte apoptotic process"/>
    <property type="evidence" value="ECO:0000315"/>
    <property type="project" value="MGI"/>
</dbReference>
<dbReference type="GO" id="GO:0046641">
    <property type="term" value="P:positive regulation of alpha-beta T cell proliferation"/>
    <property type="evidence" value="ECO:0000315"/>
    <property type="project" value="MGI"/>
</dbReference>
<dbReference type="GO" id="GO:1905168">
    <property type="term" value="P:positive regulation of double-strand break repair via homologous recombination"/>
    <property type="evidence" value="ECO:0000316"/>
    <property type="project" value="MGI"/>
</dbReference>
<dbReference type="GO" id="GO:0033092">
    <property type="term" value="P:positive regulation of immature T cell proliferation in thymus"/>
    <property type="evidence" value="ECO:0000315"/>
    <property type="project" value="MGI"/>
</dbReference>
<dbReference type="GO" id="GO:0051259">
    <property type="term" value="P:protein complex oligomerization"/>
    <property type="evidence" value="ECO:0000250"/>
    <property type="project" value="UniProtKB"/>
</dbReference>
<dbReference type="GO" id="GO:0051260">
    <property type="term" value="P:protein homooligomerization"/>
    <property type="evidence" value="ECO:0000250"/>
    <property type="project" value="UniProtKB"/>
</dbReference>
<dbReference type="GO" id="GO:0031297">
    <property type="term" value="P:replication fork processing"/>
    <property type="evidence" value="ECO:0000315"/>
    <property type="project" value="UniProtKB"/>
</dbReference>
<dbReference type="GO" id="GO:1990414">
    <property type="term" value="P:replication-born double-strand break repair via sister chromatid exchange"/>
    <property type="evidence" value="ECO:0000315"/>
    <property type="project" value="MGI"/>
</dbReference>
<dbReference type="GO" id="GO:0071139">
    <property type="term" value="P:resolution of DNA recombination intermediates"/>
    <property type="evidence" value="ECO:0000266"/>
    <property type="project" value="ComplexPortal"/>
</dbReference>
<dbReference type="GO" id="GO:0000723">
    <property type="term" value="P:telomere maintenance"/>
    <property type="evidence" value="ECO:0000316"/>
    <property type="project" value="MGI"/>
</dbReference>
<dbReference type="CDD" id="cd18016">
    <property type="entry name" value="DEXHc_RecQ2_BLM"/>
    <property type="match status" value="1"/>
</dbReference>
<dbReference type="CDD" id="cd18794">
    <property type="entry name" value="SF2_C_RecQ"/>
    <property type="match status" value="1"/>
</dbReference>
<dbReference type="FunFam" id="1.10.10.10:FF:000310">
    <property type="entry name" value="Bloom syndrome RecQ-like helicase"/>
    <property type="match status" value="1"/>
</dbReference>
<dbReference type="FunFam" id="1.10.150.80:FF:000003">
    <property type="entry name" value="Bloom syndrome RecQ-like helicase"/>
    <property type="match status" value="1"/>
</dbReference>
<dbReference type="FunFam" id="3.40.50.300:FF:000537">
    <property type="entry name" value="Bloom syndrome RecQ-like helicase"/>
    <property type="match status" value="1"/>
</dbReference>
<dbReference type="FunFam" id="3.40.50.300:FF:000340">
    <property type="entry name" value="Bloom syndrome, RecQ helicase"/>
    <property type="match status" value="1"/>
</dbReference>
<dbReference type="Gene3D" id="1.10.150.80">
    <property type="entry name" value="HRDC domain"/>
    <property type="match status" value="1"/>
</dbReference>
<dbReference type="Gene3D" id="3.40.50.300">
    <property type="entry name" value="P-loop containing nucleotide triphosphate hydrolases"/>
    <property type="match status" value="2"/>
</dbReference>
<dbReference type="Gene3D" id="1.10.10.10">
    <property type="entry name" value="Winged helix-like DNA-binding domain superfamily/Winged helix DNA-binding domain"/>
    <property type="match status" value="1"/>
</dbReference>
<dbReference type="InterPro" id="IPR012532">
    <property type="entry name" value="BDHCT"/>
</dbReference>
<dbReference type="InterPro" id="IPR032439">
    <property type="entry name" value="BDHCT_assoc"/>
</dbReference>
<dbReference type="InterPro" id="IPR032437">
    <property type="entry name" value="BLM_N"/>
</dbReference>
<dbReference type="InterPro" id="IPR011545">
    <property type="entry name" value="DEAD/DEAH_box_helicase_dom"/>
</dbReference>
<dbReference type="InterPro" id="IPR002464">
    <property type="entry name" value="DNA/RNA_helicase_DEAH_CS"/>
</dbReference>
<dbReference type="InterPro" id="IPR004589">
    <property type="entry name" value="DNA_helicase_ATP-dep_RecQ"/>
</dbReference>
<dbReference type="InterPro" id="IPR014001">
    <property type="entry name" value="Helicase_ATP-bd"/>
</dbReference>
<dbReference type="InterPro" id="IPR001650">
    <property type="entry name" value="Helicase_C-like"/>
</dbReference>
<dbReference type="InterPro" id="IPR010997">
    <property type="entry name" value="HRDC-like_sf"/>
</dbReference>
<dbReference type="InterPro" id="IPR002121">
    <property type="entry name" value="HRDC_dom"/>
</dbReference>
<dbReference type="InterPro" id="IPR044876">
    <property type="entry name" value="HRDC_dom_sf"/>
</dbReference>
<dbReference type="InterPro" id="IPR027417">
    <property type="entry name" value="P-loop_NTPase"/>
</dbReference>
<dbReference type="InterPro" id="IPR032284">
    <property type="entry name" value="RecQ_Zn-bd"/>
</dbReference>
<dbReference type="InterPro" id="IPR018982">
    <property type="entry name" value="RQC_domain"/>
</dbReference>
<dbReference type="InterPro" id="IPR036388">
    <property type="entry name" value="WH-like_DNA-bd_sf"/>
</dbReference>
<dbReference type="InterPro" id="IPR036390">
    <property type="entry name" value="WH_DNA-bd_sf"/>
</dbReference>
<dbReference type="NCBIfam" id="TIGR00614">
    <property type="entry name" value="recQ_fam"/>
    <property type="match status" value="1"/>
</dbReference>
<dbReference type="PANTHER" id="PTHR13710">
    <property type="entry name" value="DNA HELICASE RECQ FAMILY MEMBER"/>
    <property type="match status" value="1"/>
</dbReference>
<dbReference type="PANTHER" id="PTHR13710:SF153">
    <property type="entry name" value="RECQ-LIKE DNA HELICASE BLM"/>
    <property type="match status" value="1"/>
</dbReference>
<dbReference type="Pfam" id="PF08072">
    <property type="entry name" value="BDHCT"/>
    <property type="match status" value="1"/>
</dbReference>
<dbReference type="Pfam" id="PF16204">
    <property type="entry name" value="BDHCT_assoc"/>
    <property type="match status" value="1"/>
</dbReference>
<dbReference type="Pfam" id="PF16202">
    <property type="entry name" value="BLM_N"/>
    <property type="match status" value="1"/>
</dbReference>
<dbReference type="Pfam" id="PF00270">
    <property type="entry name" value="DEAD"/>
    <property type="match status" value="1"/>
</dbReference>
<dbReference type="Pfam" id="PF00271">
    <property type="entry name" value="Helicase_C"/>
    <property type="match status" value="1"/>
</dbReference>
<dbReference type="Pfam" id="PF00570">
    <property type="entry name" value="HRDC"/>
    <property type="match status" value="1"/>
</dbReference>
<dbReference type="Pfam" id="PF16124">
    <property type="entry name" value="RecQ_Zn_bind"/>
    <property type="match status" value="1"/>
</dbReference>
<dbReference type="Pfam" id="PF09382">
    <property type="entry name" value="RQC"/>
    <property type="match status" value="1"/>
</dbReference>
<dbReference type="SMART" id="SM00487">
    <property type="entry name" value="DEXDc"/>
    <property type="match status" value="1"/>
</dbReference>
<dbReference type="SMART" id="SM00490">
    <property type="entry name" value="HELICc"/>
    <property type="match status" value="1"/>
</dbReference>
<dbReference type="SMART" id="SM00341">
    <property type="entry name" value="HRDC"/>
    <property type="match status" value="1"/>
</dbReference>
<dbReference type="SMART" id="SM00956">
    <property type="entry name" value="RQC"/>
    <property type="match status" value="1"/>
</dbReference>
<dbReference type="SUPFAM" id="SSF47819">
    <property type="entry name" value="HRDC-like"/>
    <property type="match status" value="1"/>
</dbReference>
<dbReference type="SUPFAM" id="SSF52540">
    <property type="entry name" value="P-loop containing nucleoside triphosphate hydrolases"/>
    <property type="match status" value="2"/>
</dbReference>
<dbReference type="SUPFAM" id="SSF46785">
    <property type="entry name" value="Winged helix' DNA-binding domain"/>
    <property type="match status" value="1"/>
</dbReference>
<dbReference type="PROSITE" id="PS00690">
    <property type="entry name" value="DEAH_ATP_HELICASE"/>
    <property type="match status" value="1"/>
</dbReference>
<dbReference type="PROSITE" id="PS51192">
    <property type="entry name" value="HELICASE_ATP_BIND_1"/>
    <property type="match status" value="1"/>
</dbReference>
<dbReference type="PROSITE" id="PS51194">
    <property type="entry name" value="HELICASE_CTER"/>
    <property type="match status" value="1"/>
</dbReference>
<dbReference type="PROSITE" id="PS50967">
    <property type="entry name" value="HRDC"/>
    <property type="match status" value="1"/>
</dbReference>
<proteinExistence type="evidence at protein level"/>
<feature type="chain" id="PRO_0000205040" description="RecQ-like DNA helicase BLM">
    <location>
        <begin position="1"/>
        <end position="1416"/>
    </location>
</feature>
<feature type="domain" description="Helicase ATP-binding" evidence="2 5">
    <location>
        <begin position="684"/>
        <end position="859"/>
    </location>
</feature>
<feature type="domain" description="Helicase C-terminal" evidence="2 6">
    <location>
        <begin position="885"/>
        <end position="1032"/>
    </location>
</feature>
<feature type="domain" description="HRDC" evidence="2 4">
    <location>
        <begin position="1217"/>
        <end position="1297"/>
    </location>
</feature>
<feature type="region of interest" description="Disordered" evidence="7">
    <location>
        <begin position="13"/>
        <end position="34"/>
    </location>
</feature>
<feature type="region of interest" description="Disordered" evidence="7">
    <location>
        <begin position="170"/>
        <end position="237"/>
    </location>
</feature>
<feature type="region of interest" description="Disordered" evidence="7">
    <location>
        <begin position="249"/>
        <end position="281"/>
    </location>
</feature>
<feature type="region of interest" description="Necessary for dimerization and homooligomerization" evidence="2">
    <location>
        <begin position="367"/>
        <end position="419"/>
    </location>
</feature>
<feature type="region of interest" description="3' overhang DNA-binding" evidence="2">
    <location>
        <begin position="878"/>
        <end position="881"/>
    </location>
</feature>
<feature type="region of interest" description="3' overhang DNA-binding" evidence="2">
    <location>
        <begin position="905"/>
        <end position="907"/>
    </location>
</feature>
<feature type="region of interest" description="3' overhang DNA-binding" evidence="2">
    <location>
        <begin position="1008"/>
        <end position="1011"/>
    </location>
</feature>
<feature type="region of interest" description="DNA Holliday junction binding" evidence="2">
    <location>
        <begin position="1102"/>
        <end position="1144"/>
    </location>
</feature>
<feature type="region of interest" description="3' overhang DNA-binding" evidence="2">
    <location>
        <begin position="1115"/>
        <end position="1117"/>
    </location>
</feature>
<feature type="region of interest" description="3' overhang DNA-binding" evidence="2">
    <location>
        <begin position="1126"/>
        <end position="1130"/>
    </location>
</feature>
<feature type="region of interest" description="3' overhang DNA-binding" evidence="2">
    <location>
        <begin position="1165"/>
        <end position="1171"/>
    </location>
</feature>
<feature type="region of interest" description="Necessary for ssDNA and DNA Holliday junction binding" evidence="2">
    <location>
        <begin position="1232"/>
        <end position="1249"/>
    </location>
</feature>
<feature type="region of interest" description="Disordered" evidence="7">
    <location>
        <begin position="1295"/>
        <end position="1405"/>
    </location>
</feature>
<feature type="short sequence motif" description="DEAH box">
    <location>
        <begin position="803"/>
        <end position="806"/>
    </location>
</feature>
<feature type="short sequence motif" description="Nuclear localization signal" evidence="3">
    <location>
        <begin position="1333"/>
        <end position="1348"/>
    </location>
</feature>
<feature type="compositionally biased region" description="Polar residues" evidence="7">
    <location>
        <begin position="20"/>
        <end position="29"/>
    </location>
</feature>
<feature type="compositionally biased region" description="Acidic residues" evidence="7">
    <location>
        <begin position="220"/>
        <end position="232"/>
    </location>
</feature>
<feature type="compositionally biased region" description="Basic and acidic residues" evidence="7">
    <location>
        <begin position="267"/>
        <end position="281"/>
    </location>
</feature>
<feature type="compositionally biased region" description="Acidic residues" evidence="7">
    <location>
        <begin position="1309"/>
        <end position="1318"/>
    </location>
</feature>
<feature type="compositionally biased region" description="Basic residues" evidence="7">
    <location>
        <begin position="1332"/>
        <end position="1349"/>
    </location>
</feature>
<feature type="compositionally biased region" description="Low complexity" evidence="7">
    <location>
        <begin position="1357"/>
        <end position="1371"/>
    </location>
</feature>
<feature type="compositionally biased region" description="Low complexity" evidence="7">
    <location>
        <begin position="1378"/>
        <end position="1392"/>
    </location>
</feature>
<feature type="binding site" evidence="2">
    <location>
        <begin position="676"/>
        <end position="680"/>
    </location>
    <ligand>
        <name>ATP</name>
        <dbReference type="ChEBI" id="CHEBI:30616"/>
    </ligand>
</feature>
<feature type="binding site" evidence="2">
    <location>
        <begin position="700"/>
        <end position="704"/>
    </location>
    <ligand>
        <name>ATP</name>
        <dbReference type="ChEBI" id="CHEBI:30616"/>
    </ligand>
</feature>
<feature type="binding site" evidence="2">
    <location>
        <position position="990"/>
    </location>
    <ligand>
        <name>ATP</name>
        <dbReference type="ChEBI" id="CHEBI:30616"/>
    </ligand>
</feature>
<feature type="binding site" evidence="2">
    <location>
        <position position="1044"/>
    </location>
    <ligand>
        <name>Zn(2+)</name>
        <dbReference type="ChEBI" id="CHEBI:29105"/>
    </ligand>
</feature>
<feature type="binding site" evidence="2">
    <location>
        <position position="1063"/>
    </location>
    <ligand>
        <name>Zn(2+)</name>
        <dbReference type="ChEBI" id="CHEBI:29105"/>
    </ligand>
</feature>
<feature type="binding site" evidence="2">
    <location>
        <position position="1071"/>
    </location>
    <ligand>
        <name>Zn(2+)</name>
        <dbReference type="ChEBI" id="CHEBI:29105"/>
    </ligand>
</feature>
<feature type="binding site" evidence="2">
    <location>
        <position position="1074"/>
    </location>
    <ligand>
        <name>Zn(2+)</name>
        <dbReference type="ChEBI" id="CHEBI:29105"/>
    </ligand>
</feature>
<feature type="binding site" evidence="2">
    <location>
        <position position="1247"/>
    </location>
    <ligand>
        <name>ATP</name>
        <dbReference type="ChEBI" id="CHEBI:30616"/>
    </ligand>
</feature>
<feature type="site" description="3' overhang DNA-binding" evidence="2">
    <location>
        <position position="725"/>
    </location>
</feature>
<feature type="site" description="3' overhang DNA-binding" evidence="2">
    <location>
        <position position="816"/>
    </location>
</feature>
<feature type="site" description="3' overhang DNA-binding; via amide nitrogen" evidence="2">
    <location>
        <position position="928"/>
    </location>
</feature>
<feature type="site" description="3' overhang DNA-binding" evidence="2">
    <location>
        <position position="954"/>
    </location>
</feature>
<feature type="site" description="3' overhang DNA-binding" evidence="2">
    <location>
        <position position="976"/>
    </location>
</feature>
<feature type="site" description="3' overhang DNA-binding" evidence="2">
    <location>
        <position position="1115"/>
    </location>
</feature>
<feature type="modified residue" description="Phosphoserine" evidence="2">
    <location>
        <position position="28"/>
    </location>
</feature>
<feature type="modified residue" description="Phosphoserine" evidence="2">
    <location>
        <position position="47"/>
    </location>
</feature>
<feature type="modified residue" description="Phosphothreonine" evidence="2">
    <location>
        <position position="56"/>
    </location>
</feature>
<feature type="modified residue" description="Phosphothreonine" evidence="2">
    <location>
        <position position="114"/>
    </location>
</feature>
<feature type="modified residue" description="Phosphoserine" evidence="13">
    <location>
        <position position="247"/>
    </location>
</feature>
<feature type="modified residue" description="Phosphoserine" evidence="13">
    <location>
        <position position="249"/>
    </location>
</feature>
<feature type="modified residue" description="Phosphoserine" evidence="2">
    <location>
        <position position="333"/>
    </location>
</feature>
<feature type="modified residue" description="Phosphoserine" evidence="2">
    <location>
        <position position="343"/>
    </location>
</feature>
<feature type="modified residue" description="Phosphoserine" evidence="2">
    <location>
        <position position="363"/>
    </location>
</feature>
<feature type="modified residue" description="Phosphoserine" evidence="2">
    <location>
        <position position="431"/>
    </location>
</feature>
<feature type="modified residue" description="Phosphoserine" evidence="2">
    <location>
        <position position="469"/>
    </location>
</feature>
<feature type="modified residue" description="Phosphoserine" evidence="2">
    <location>
        <position position="504"/>
    </location>
</feature>
<feature type="modified residue" description="Phosphothreonine" evidence="2">
    <location>
        <position position="513"/>
    </location>
</feature>
<feature type="modified residue" description="N6-acetyllysine" evidence="2">
    <location>
        <position position="871"/>
    </location>
</feature>
<feature type="modified residue" description="Phosphoserine" evidence="2">
    <location>
        <position position="1202"/>
    </location>
</feature>
<feature type="modified residue" description="Phosphoserine" evidence="2">
    <location>
        <position position="1301"/>
    </location>
</feature>
<feature type="modified residue" description="Phosphothreonine" evidence="13">
    <location>
        <position position="1311"/>
    </location>
</feature>
<feature type="cross-link" description="Glycyl lysine isopeptide (Lys-Gly) (interchain with G-Cter in SUMO2)" evidence="2">
    <location>
        <position position="31"/>
    </location>
</feature>
<feature type="cross-link" description="Glycyl lysine isopeptide (Lys-Gly) (interchain with G-Cter in SUMO2)" evidence="2">
    <location>
        <position position="38"/>
    </location>
</feature>
<feature type="cross-link" description="Glycyl lysine isopeptide (Lys-Gly) (interchain with G-Cter in SUMO2)" evidence="2">
    <location>
        <position position="55"/>
    </location>
</feature>
<feature type="cross-link" description="Glycyl lysine isopeptide (Lys-Gly) (interchain with G-Cter in SUMO2)" evidence="2">
    <location>
        <position position="62"/>
    </location>
</feature>
<feature type="cross-link" description="Glycyl lysine isopeptide (Lys-Gly) (interchain with G-Cter in SUMO2)" evidence="2">
    <location>
        <position position="91"/>
    </location>
</feature>
<feature type="cross-link" description="Glycyl lysine isopeptide (Lys-Gly) (interchain with G-Cter in SUMO2)" evidence="2">
    <location>
        <position position="129"/>
    </location>
</feature>
<feature type="cross-link" description="Glycyl lysine isopeptide (Lys-Gly) (interchain with G-Cter in SUMO2)" evidence="2">
    <location>
        <position position="191"/>
    </location>
</feature>
<feature type="cross-link" description="Glycyl lysine isopeptide (Lys-Gly) (interchain with G-Cter in SUMO2)" evidence="2">
    <location>
        <position position="201"/>
    </location>
</feature>
<feature type="cross-link" description="Glycyl lysine isopeptide (Lys-Gly) (interchain with G-Cter in ubiquitin)" evidence="9">
    <location>
        <position position="264"/>
    </location>
</feature>
<feature type="cross-link" description="Glycyl lysine isopeptide (Lys-Gly) (interchain with G-Cter in SUMO2)" evidence="2">
    <location>
        <position position="349"/>
    </location>
</feature>
<feature type="cross-link" description="Glycyl lysine isopeptide (Lys-Gly) (interchain with G-Cter in SUMO2)" evidence="2">
    <location>
        <position position="456"/>
    </location>
</feature>
<feature type="cross-link" description="Glycyl lysine isopeptide (Lys-Gly) (interchain with G-Cter in SUMO2)" evidence="2">
    <location>
        <position position="481"/>
    </location>
</feature>
<feature type="cross-link" description="Glycyl lysine isopeptide (Lys-Gly) (interchain with G-Cter in SUMO2)" evidence="2">
    <location>
        <position position="489"/>
    </location>
</feature>
<feature type="cross-link" description="Glycyl lysine isopeptide (Lys-Gly) (interchain with G-Cter in SUMO2)" evidence="2">
    <location>
        <position position="503"/>
    </location>
</feature>
<feature type="cross-link" description="Glycyl lysine isopeptide (Lys-Gly) (interchain with G-Cter in SUMO2)" evidence="2">
    <location>
        <position position="536"/>
    </location>
</feature>
<feature type="cross-link" description="Glycyl lysine isopeptide (Lys-Gly) (interchain with G-Cter in SUMO2)" evidence="2">
    <location>
        <position position="540"/>
    </location>
</feature>
<feature type="cross-link" description="Glycyl lysine isopeptide (Lys-Gly) (interchain with G-Cter in SUMO2)" evidence="2">
    <location>
        <position position="596"/>
    </location>
</feature>
<feature type="cross-link" description="Glycyl lysine isopeptide (Lys-Gly) (interchain with G-Cter in SUMO2)" evidence="2">
    <location>
        <position position="602"/>
    </location>
</feature>
<feature type="cross-link" description="Glycyl lysine isopeptide (Lys-Gly) (interchain with G-Cter in SUMO2)" evidence="2">
    <location>
        <position position="612"/>
    </location>
</feature>
<feature type="cross-link" description="Glycyl lysine isopeptide (Lys-Gly) (interchain with G-Cter in SUMO2)" evidence="2">
    <location>
        <position position="1130"/>
    </location>
</feature>
<feature type="cross-link" description="Glycyl lysine isopeptide (Lys-Gly) (interchain with G-Cter in SUMO2)" evidence="2">
    <location>
        <position position="1204"/>
    </location>
</feature>
<feature type="cross-link" description="Glycyl lysine isopeptide (Lys-Gly) (interchain with G-Cter in SUMO2)" evidence="2">
    <location>
        <position position="1212"/>
    </location>
</feature>
<feature type="cross-link" description="Glycyl lysine isopeptide (Lys-Gly) (interchain with G-Cter in SUMO2)" evidence="2">
    <location>
        <position position="1371"/>
    </location>
</feature>
<feature type="cross-link" description="Glycyl lysine isopeptide (Lys-Gly) (interchain with G-Cter in SUMO2)" evidence="2">
    <location>
        <position position="1394"/>
    </location>
</feature>
<feature type="mutagenesis site" description="Reduces TRIM25-mediated ubiquitination in response to DNA damage. Reduces recruitment of BLM to replication forks and impairs the restart of stalled replication forks." evidence="9">
    <original>K</original>
    <variation>R</variation>
    <location>
        <position position="264"/>
    </location>
</feature>
<feature type="mutagenesis site" description="Reduced ATPase and helicase activities." evidence="11">
    <original>Q</original>
    <variation>P</variation>
    <location>
        <position position="680"/>
    </location>
</feature>
<feature type="mutagenesis site" description="Reduced ATPase and helicase activities." evidence="11">
    <original>K</original>
    <variation>A</variation>
    <location>
        <position position="703"/>
    </location>
</feature>
<feature type="mutagenesis site" description="Reduced ATPase and helicase activities." evidence="11">
    <original>I</original>
    <variation>T</variation>
    <location>
        <position position="849"/>
    </location>
</feature>
<feature type="mutagenesis site" description="Reduced ATPase and helicase activities." evidence="11">
    <original>C</original>
    <variation>S</variation>
    <location>
        <position position="1063"/>
    </location>
</feature>
<feature type="sequence conflict" description="In Ref. 2; BAA32001." evidence="12" ref="2">
    <original>L</original>
    <variation>P</variation>
    <location>
        <position position="131"/>
    </location>
</feature>
<feature type="sequence conflict" description="In Ref. 2; BAA32001." evidence="12" ref="2">
    <original>E</original>
    <variation>EE</variation>
    <location>
        <position position="229"/>
    </location>
</feature>
<feature type="sequence conflict" description="In Ref. 2; BAA32001." evidence="12" ref="2">
    <original>V</original>
    <variation>M</variation>
    <location>
        <position position="535"/>
    </location>
</feature>
<feature type="sequence conflict" description="In Ref. 2; BAA32001." evidence="12" ref="2">
    <original>WN</original>
    <variation>RT</variation>
    <location>
        <begin position="546"/>
        <end position="547"/>
    </location>
</feature>
<feature type="sequence conflict" description="In Ref. 2; BAA32001." evidence="12" ref="2">
    <location>
        <position position="574"/>
    </location>
</feature>
<feature type="sequence conflict" description="In Ref. 2; BAA32001." evidence="12" ref="2">
    <original>T</original>
    <variation>A</variation>
    <location>
        <position position="591"/>
    </location>
</feature>
<feature type="sequence conflict" description="In Ref. 2; BAA32001." evidence="12" ref="2">
    <original>T</original>
    <variation>N</variation>
    <location>
        <position position="621"/>
    </location>
</feature>
<feature type="sequence conflict" description="In Ref. 2; BAA32001." evidence="12" ref="2">
    <original>V</original>
    <variation>L</variation>
    <location>
        <position position="1295"/>
    </location>
</feature>
<accession>O88700</accession>
<accession>O88198</accession>
<evidence type="ECO:0000250" key="1"/>
<evidence type="ECO:0000250" key="2">
    <source>
        <dbReference type="UniProtKB" id="P54132"/>
    </source>
</evidence>
<evidence type="ECO:0000255" key="3"/>
<evidence type="ECO:0000255" key="4">
    <source>
        <dbReference type="PROSITE-ProRule" id="PRU00328"/>
    </source>
</evidence>
<evidence type="ECO:0000255" key="5">
    <source>
        <dbReference type="PROSITE-ProRule" id="PRU00541"/>
    </source>
</evidence>
<evidence type="ECO:0000255" key="6">
    <source>
        <dbReference type="PROSITE-ProRule" id="PRU00542"/>
    </source>
</evidence>
<evidence type="ECO:0000256" key="7">
    <source>
        <dbReference type="SAM" id="MobiDB-lite"/>
    </source>
</evidence>
<evidence type="ECO:0000269" key="8">
    <source>
    </source>
</evidence>
<evidence type="ECO:0000269" key="9">
    <source>
    </source>
</evidence>
<evidence type="ECO:0000269" key="10">
    <source>
    </source>
</evidence>
<evidence type="ECO:0000269" key="11">
    <source>
    </source>
</evidence>
<evidence type="ECO:0000305" key="12"/>
<evidence type="ECO:0007744" key="13">
    <source>
    </source>
</evidence>
<reference key="1">
    <citation type="journal article" date="1998" name="Oncogene">
        <title>Point mutations causing Bloom's syndrome abolish ATPase and DNA helicase activities of the BLM protein.</title>
        <authorList>
            <person name="Bahr A."/>
            <person name="de Graeve F."/>
            <person name="Kedinger C."/>
            <person name="Chatton B."/>
        </authorList>
    </citation>
    <scope>NUCLEOTIDE SEQUENCE [MRNA]</scope>
    <scope>FUNCTION</scope>
    <scope>CATALYTIC ACTIVITY</scope>
    <scope>TISSUE SPECIFICITY</scope>
    <scope>MUTAGENESIS OF GLN-680; LYS-703; ILE-849 AND CYS-1063</scope>
</reference>
<reference key="2">
    <citation type="journal article" date="1998" name="Biochim. Biophys. Acta">
        <title>cDNA cloning of mouse BLM gene, the homologue to human Bloom's syndrome gene, which is highly expressed in the testis at the mRNA level.</title>
        <authorList>
            <person name="Seki T."/>
            <person name="Wang W.-S."/>
            <person name="Okumura N."/>
            <person name="Seki M."/>
            <person name="Katada T."/>
            <person name="Enomoto T."/>
        </authorList>
    </citation>
    <scope>NUCLEOTIDE SEQUENCE [MRNA]</scope>
    <scope>TISSUE SPECIFICITY</scope>
    <source>
        <strain>BALB/cJ</strain>
        <tissue>Brain</tissue>
        <tissue>Spermatocyte</tissue>
        <tissue>Testis</tissue>
    </source>
</reference>
<reference key="3">
    <citation type="journal article" date="2010" name="Cell">
        <title>A tissue-specific atlas of mouse protein phosphorylation and expression.</title>
        <authorList>
            <person name="Huttlin E.L."/>
            <person name="Jedrychowski M.P."/>
            <person name="Elias J.E."/>
            <person name="Goswami T."/>
            <person name="Rad R."/>
            <person name="Beausoleil S.A."/>
            <person name="Villen J."/>
            <person name="Haas W."/>
            <person name="Sowa M.E."/>
            <person name="Gygi S.P."/>
        </authorList>
    </citation>
    <scope>PHOSPHORYLATION [LARGE SCALE ANALYSIS] AT SER-247; SER-249 AND THR-1311</scope>
    <scope>IDENTIFICATION BY MASS SPECTROMETRY [LARGE SCALE ANALYSIS]</scope>
    <source>
        <tissue>Spleen</tissue>
        <tissue>Testis</tissue>
    </source>
</reference>
<reference key="4">
    <citation type="journal article" date="2016" name="PLoS ONE">
        <title>The GIY-YIG type endonuclease ankyrin repeat and LEM domain-containing protein 1 (ANKLE1) is dispensable for mouse hematopoiesis.</title>
        <authorList>
            <person name="Braun J."/>
            <person name="Meixner A."/>
            <person name="Brachner A."/>
            <person name="Foisner R."/>
        </authorList>
    </citation>
    <scope>FUNCTION</scope>
    <scope>TISSUE SPECIFICITY</scope>
</reference>
<reference key="5">
    <citation type="journal article" date="2018" name="Cell Res.">
        <title>Mouse embryonic stem cells have increased capacity for replication fork restart driven by the specific Filia-Floped protein complex.</title>
        <authorList>
            <person name="Zhao B."/>
            <person name="Zhang W."/>
            <person name="Cun Y."/>
            <person name="Li J."/>
            <person name="Liu Y."/>
            <person name="Gao J."/>
            <person name="Zhu H."/>
            <person name="Zhou H."/>
            <person name="Zhang R."/>
            <person name="Zheng P."/>
        </authorList>
    </citation>
    <scope>FUNCTION</scope>
    <scope>INTERACTION WITH KHDC3; OOEP AND TRIM25</scope>
    <scope>SUBCELLULAR LOCATION</scope>
    <scope>UBIQUITINATION AT LYS-264</scope>
    <scope>MUTAGENESIS OF LYS-264</scope>
</reference>
<name>BLM_MOUSE</name>
<protein>
    <recommendedName>
        <fullName>RecQ-like DNA helicase BLM</fullName>
        <ecNumber evidence="10">5.6.2.4</ecNumber>
    </recommendedName>
    <alternativeName>
        <fullName>Bloom syndrome protein homolog</fullName>
        <shortName>mBLM</shortName>
    </alternativeName>
    <alternativeName>
        <fullName evidence="12">DNA 3'-5' helicase BLM</fullName>
    </alternativeName>
    <alternativeName>
        <fullName>RecQ helicase homolog</fullName>
    </alternativeName>
</protein>